<proteinExistence type="evidence at transcript level"/>
<accession>Q9TVU1</accession>
<accession>Q9UA80</accession>
<accession>Q9UA81</accession>
<accession>Q9UA82</accession>
<accession>Q9UA84</accession>
<feature type="signal peptide" evidence="2">
    <location>
        <begin position="1" status="less than"/>
        <end position="17"/>
    </location>
</feature>
<feature type="propeptide" id="PRO_0000392114" evidence="1">
    <location>
        <begin position="18"/>
        <end position="41"/>
    </location>
</feature>
<feature type="peptide" id="PRO_0000392115" description="Conotoxin AbVIC">
    <location>
        <begin position="42"/>
        <end position="70"/>
    </location>
</feature>
<feature type="region of interest" description="Disordered" evidence="3">
    <location>
        <begin position="19"/>
        <end position="41"/>
    </location>
</feature>
<feature type="disulfide bond" evidence="1">
    <location>
        <begin position="43"/>
        <end position="57"/>
    </location>
</feature>
<feature type="disulfide bond" evidence="1">
    <location>
        <begin position="50"/>
        <end position="61"/>
    </location>
</feature>
<feature type="disulfide bond" evidence="1">
    <location>
        <begin position="56"/>
        <end position="68"/>
    </location>
</feature>
<feature type="sequence conflict" description="In Ref. 1 and 2; AAD48291." evidence="4" ref="1 2">
    <original>L</original>
    <variation>I</variation>
    <location>
        <position position="2"/>
    </location>
</feature>
<feature type="sequence conflict" description="In Ref. 1 and 2; AAD48287." evidence="4" ref="1 2">
    <original>I</original>
    <variation>V</variation>
    <location>
        <position position="3"/>
    </location>
</feature>
<feature type="sequence conflict" description="In Ref. 1 and 2; AAD48290." evidence="4" ref="1 2">
    <original>K</original>
    <variation>E</variation>
    <location>
        <position position="35"/>
    </location>
</feature>
<feature type="sequence conflict" description="In Ref. 1 and 2; AAD48293." evidence="4" ref="1 2">
    <original>C</original>
    <variation>R</variation>
    <location>
        <position position="43"/>
    </location>
</feature>
<feature type="non-terminal residue">
    <location>
        <position position="1"/>
    </location>
</feature>
<reference key="1">
    <citation type="journal article" date="1999" name="Proc. Natl. Acad. Sci. U.S.A.">
        <title>Molecular genetics of ecological diversification: duplication and rapid evolution of toxin genes of the venomous gastropod Conus.</title>
        <authorList>
            <person name="Duda T.F. Jr."/>
            <person name="Palumbi S.R."/>
        </authorList>
    </citation>
    <scope>NUCLEOTIDE SEQUENCE [MRNA]</scope>
    <source>
        <tissue>Venom duct</tissue>
    </source>
</reference>
<reference key="2">
    <citation type="journal article" date="2004" name="Proc. R. Soc. B">
        <title>Gene expression and feeding ecology: evolution of piscivory in the venomous gastropod genus Conus.</title>
        <authorList>
            <person name="Duda T.F. Jr."/>
            <person name="Palumbi S.R."/>
        </authorList>
    </citation>
    <scope>NUCLEOTIDE SEQUENCE [MRNA]</scope>
    <source>
        <tissue>Venom duct</tissue>
    </source>
</reference>
<sequence>VLIIAVLFLTACQLTTAETSSRGKQKHRALRSTDKNSKLTRGCTPPGGACGGHAHCCSQSCNILASTCNA</sequence>
<dbReference type="EMBL" id="AF090008">
    <property type="protein sequence ID" value="AAD48262.1"/>
    <property type="molecule type" value="mRNA"/>
</dbReference>
<dbReference type="EMBL" id="AF090009">
    <property type="protein sequence ID" value="AAD48263.1"/>
    <property type="molecule type" value="mRNA"/>
</dbReference>
<dbReference type="EMBL" id="AF090010">
    <property type="protein sequence ID" value="AAD48264.1"/>
    <property type="molecule type" value="mRNA"/>
</dbReference>
<dbReference type="EMBL" id="AF090011">
    <property type="protein sequence ID" value="AAD48265.1"/>
    <property type="molecule type" value="mRNA"/>
</dbReference>
<dbReference type="EMBL" id="AF090012">
    <property type="protein sequence ID" value="AAD48266.1"/>
    <property type="molecule type" value="mRNA"/>
</dbReference>
<dbReference type="EMBL" id="AF090013">
    <property type="protein sequence ID" value="AAD48267.1"/>
    <property type="molecule type" value="mRNA"/>
</dbReference>
<dbReference type="EMBL" id="AF090014">
    <property type="protein sequence ID" value="AAD48268.1"/>
    <property type="molecule type" value="mRNA"/>
</dbReference>
<dbReference type="EMBL" id="AF090015">
    <property type="protein sequence ID" value="AAD48269.1"/>
    <property type="molecule type" value="mRNA"/>
</dbReference>
<dbReference type="EMBL" id="AF090016">
    <property type="protein sequence ID" value="AAD48270.1"/>
    <property type="molecule type" value="mRNA"/>
</dbReference>
<dbReference type="EMBL" id="AF090017">
    <property type="protein sequence ID" value="AAD48271.1"/>
    <property type="molecule type" value="mRNA"/>
</dbReference>
<dbReference type="EMBL" id="AF090018">
    <property type="protein sequence ID" value="AAD48272.1"/>
    <property type="molecule type" value="mRNA"/>
</dbReference>
<dbReference type="EMBL" id="AF090019">
    <property type="protein sequence ID" value="AAD48273.1"/>
    <property type="molecule type" value="mRNA"/>
</dbReference>
<dbReference type="EMBL" id="AF090020">
    <property type="protein sequence ID" value="AAD48274.1"/>
    <property type="molecule type" value="mRNA"/>
</dbReference>
<dbReference type="EMBL" id="AF090021">
    <property type="protein sequence ID" value="AAD48275.1"/>
    <property type="molecule type" value="mRNA"/>
</dbReference>
<dbReference type="EMBL" id="AF090022">
    <property type="protein sequence ID" value="AAD48276.1"/>
    <property type="molecule type" value="mRNA"/>
</dbReference>
<dbReference type="EMBL" id="AF090023">
    <property type="protein sequence ID" value="AAD48277.1"/>
    <property type="molecule type" value="mRNA"/>
</dbReference>
<dbReference type="EMBL" id="AF090024">
    <property type="protein sequence ID" value="AAD48278.1"/>
    <property type="molecule type" value="mRNA"/>
</dbReference>
<dbReference type="EMBL" id="AF090025">
    <property type="protein sequence ID" value="AAD48279.1"/>
    <property type="molecule type" value="mRNA"/>
</dbReference>
<dbReference type="EMBL" id="AF090026">
    <property type="protein sequence ID" value="AAD48280.1"/>
    <property type="molecule type" value="mRNA"/>
</dbReference>
<dbReference type="EMBL" id="AF090027">
    <property type="protein sequence ID" value="AAD48281.1"/>
    <property type="molecule type" value="mRNA"/>
</dbReference>
<dbReference type="EMBL" id="AF090028">
    <property type="protein sequence ID" value="AAD48282.1"/>
    <property type="molecule type" value="mRNA"/>
</dbReference>
<dbReference type="EMBL" id="AF090029">
    <property type="protein sequence ID" value="AAD48283.1"/>
    <property type="molecule type" value="mRNA"/>
</dbReference>
<dbReference type="EMBL" id="AF090030">
    <property type="protein sequence ID" value="AAD48284.1"/>
    <property type="molecule type" value="mRNA"/>
</dbReference>
<dbReference type="EMBL" id="AF090031">
    <property type="protein sequence ID" value="AAD48285.1"/>
    <property type="molecule type" value="mRNA"/>
</dbReference>
<dbReference type="EMBL" id="AF090032">
    <property type="protein sequence ID" value="AAD48286.1"/>
    <property type="molecule type" value="mRNA"/>
</dbReference>
<dbReference type="EMBL" id="AF090033">
    <property type="protein sequence ID" value="AAD48287.1"/>
    <property type="molecule type" value="mRNA"/>
</dbReference>
<dbReference type="EMBL" id="AF090036">
    <property type="protein sequence ID" value="AAD48289.1"/>
    <property type="molecule type" value="mRNA"/>
</dbReference>
<dbReference type="EMBL" id="AF090037">
    <property type="protein sequence ID" value="AAD48290.1"/>
    <property type="molecule type" value="mRNA"/>
</dbReference>
<dbReference type="EMBL" id="AF090038">
    <property type="protein sequence ID" value="AAD48291.1"/>
    <property type="molecule type" value="mRNA"/>
</dbReference>
<dbReference type="EMBL" id="AF090039">
    <property type="protein sequence ID" value="AAD48292.1"/>
    <property type="molecule type" value="mRNA"/>
</dbReference>
<dbReference type="EMBL" id="AF090040">
    <property type="protein sequence ID" value="AAD48293.1"/>
    <property type="molecule type" value="mRNA"/>
</dbReference>
<dbReference type="SMR" id="Q9TVU1"/>
<dbReference type="ConoServer" id="1009">
    <property type="toxin name" value="ABVIC precursor"/>
</dbReference>
<dbReference type="ConoServer" id="1012">
    <property type="toxin name" value="ABVIC precursor"/>
</dbReference>
<dbReference type="ConoServer" id="1013">
    <property type="toxin name" value="ABVIC precursor"/>
</dbReference>
<dbReference type="ConoServer" id="1015">
    <property type="toxin name" value="ABVIC precursor"/>
</dbReference>
<dbReference type="ConoServer" id="984">
    <property type="toxin name" value="ABVIC precursor"/>
</dbReference>
<dbReference type="GO" id="GO:0005576">
    <property type="term" value="C:extracellular region"/>
    <property type="evidence" value="ECO:0007669"/>
    <property type="project" value="UniProtKB-SubCell"/>
</dbReference>
<dbReference type="GO" id="GO:0008200">
    <property type="term" value="F:ion channel inhibitor activity"/>
    <property type="evidence" value="ECO:0007669"/>
    <property type="project" value="InterPro"/>
</dbReference>
<dbReference type="GO" id="GO:0090729">
    <property type="term" value="F:toxin activity"/>
    <property type="evidence" value="ECO:0007669"/>
    <property type="project" value="UniProtKB-KW"/>
</dbReference>
<dbReference type="InterPro" id="IPR004214">
    <property type="entry name" value="Conotoxin"/>
</dbReference>
<dbReference type="Pfam" id="PF02950">
    <property type="entry name" value="Conotoxin"/>
    <property type="match status" value="1"/>
</dbReference>
<keyword id="KW-1015">Disulfide bond</keyword>
<keyword id="KW-0960">Knottin</keyword>
<keyword id="KW-0964">Secreted</keyword>
<keyword id="KW-0732">Signal</keyword>
<keyword id="KW-0800">Toxin</keyword>
<organism>
    <name type="scientific">Conus abbreviatus</name>
    <name type="common">Abbreviated cone</name>
    <name type="synonym">Miliariconus abbreviatus</name>
    <dbReference type="NCBI Taxonomy" id="100123"/>
    <lineage>
        <taxon>Eukaryota</taxon>
        <taxon>Metazoa</taxon>
        <taxon>Spiralia</taxon>
        <taxon>Lophotrochozoa</taxon>
        <taxon>Mollusca</taxon>
        <taxon>Gastropoda</taxon>
        <taxon>Caenogastropoda</taxon>
        <taxon>Neogastropoda</taxon>
        <taxon>Conoidea</taxon>
        <taxon>Conidae</taxon>
        <taxon>Conus</taxon>
        <taxon>Virroconus</taxon>
    </lineage>
</organism>
<name>O16C_CONAB</name>
<evidence type="ECO:0000250" key="1"/>
<evidence type="ECO:0000255" key="2"/>
<evidence type="ECO:0000256" key="3">
    <source>
        <dbReference type="SAM" id="MobiDB-lite"/>
    </source>
</evidence>
<evidence type="ECO:0000305" key="4"/>
<comment type="subcellular location">
    <subcellularLocation>
        <location evidence="1">Secreted</location>
    </subcellularLocation>
</comment>
<comment type="tissue specificity">
    <text>Expressed by the venom duct.</text>
</comment>
<comment type="domain">
    <text evidence="1">The presence of a 'disulfide through disulfide knot' structurally defines this protein as a knottin.</text>
</comment>
<comment type="domain">
    <text>The cysteine framework is VI/VII (C-C-CC-C-C).</text>
</comment>
<comment type="similarity">
    <text evidence="4">Belongs to the conotoxin O1 superfamily.</text>
</comment>
<protein>
    <recommendedName>
        <fullName>Conotoxin AbVIC</fullName>
    </recommendedName>
</protein>